<comment type="function">
    <text evidence="1">Probable lipolytic acyl hydrolase (LAH), an activity which is thought to be involved in the response of tubers to pathogens.</text>
</comment>
<comment type="subcellular location">
    <subcellularLocation>
        <location evidence="1">Vacuole</location>
    </subcellularLocation>
</comment>
<comment type="tissue specificity">
    <text evidence="4">Tuber.</text>
</comment>
<comment type="developmental stage">
    <text evidence="4">Accumulates progressively during tuber formation from stolon.</text>
</comment>
<comment type="domain">
    <text>The nitrogen atoms of the two glycine residues in the GGXR motif define the oxyanion hole, and stabilize the oxyanion that forms during the nucleophilic attack by the catalytic serine during substrate cleavage.</text>
</comment>
<comment type="miscellaneous">
    <text>Patatin have a dual role as a somatic storage protein and as an enzyme involved in host resistance.</text>
</comment>
<comment type="similarity">
    <text evidence="5">Belongs to the patatin family.</text>
</comment>
<keyword id="KW-0175">Coiled coil</keyword>
<keyword id="KW-0325">Glycoprotein</keyword>
<keyword id="KW-0378">Hydrolase</keyword>
<keyword id="KW-0442">Lipid degradation</keyword>
<keyword id="KW-0443">Lipid metabolism</keyword>
<keyword id="KW-0611">Plant defense</keyword>
<keyword id="KW-1185">Reference proteome</keyword>
<keyword id="KW-0732">Signal</keyword>
<keyword id="KW-0758">Storage protein</keyword>
<keyword id="KW-0926">Vacuole</keyword>
<dbReference type="EC" id="3.1.1.-"/>
<dbReference type="EMBL" id="DQ274502">
    <property type="protein sequence ID" value="ABC55702.1"/>
    <property type="molecule type" value="mRNA"/>
</dbReference>
<dbReference type="SMR" id="Q2MY36"/>
<dbReference type="STRING" id="4113.Q2MY36"/>
<dbReference type="Allergome" id="639">
    <property type="allergen name" value="Sola t 1"/>
</dbReference>
<dbReference type="ProMEX" id="Q2MY36"/>
<dbReference type="InParanoid" id="Q2MY36"/>
<dbReference type="Proteomes" id="UP000011115">
    <property type="component" value="Unassembled WGS sequence"/>
</dbReference>
<dbReference type="ExpressionAtlas" id="Q2MY36">
    <property type="expression patterns" value="baseline"/>
</dbReference>
<dbReference type="GO" id="GO:0005773">
    <property type="term" value="C:vacuole"/>
    <property type="evidence" value="ECO:0007669"/>
    <property type="project" value="UniProtKB-SubCell"/>
</dbReference>
<dbReference type="GO" id="GO:0047372">
    <property type="term" value="F:monoacylglycerol lipase activity"/>
    <property type="evidence" value="ECO:0000318"/>
    <property type="project" value="GO_Central"/>
</dbReference>
<dbReference type="GO" id="GO:0045735">
    <property type="term" value="F:nutrient reservoir activity"/>
    <property type="evidence" value="ECO:0007669"/>
    <property type="project" value="UniProtKB-KW"/>
</dbReference>
<dbReference type="GO" id="GO:0004620">
    <property type="term" value="F:phospholipase activity"/>
    <property type="evidence" value="ECO:0000318"/>
    <property type="project" value="GO_Central"/>
</dbReference>
<dbReference type="GO" id="GO:0006952">
    <property type="term" value="P:defense response"/>
    <property type="evidence" value="ECO:0007669"/>
    <property type="project" value="UniProtKB-KW"/>
</dbReference>
<dbReference type="GO" id="GO:0016042">
    <property type="term" value="P:lipid catabolic process"/>
    <property type="evidence" value="ECO:0007669"/>
    <property type="project" value="UniProtKB-KW"/>
</dbReference>
<dbReference type="Gene3D" id="3.40.1090.10">
    <property type="entry name" value="Cytosolic phospholipase A2 catalytic domain"/>
    <property type="match status" value="1"/>
</dbReference>
<dbReference type="InterPro" id="IPR016035">
    <property type="entry name" value="Acyl_Trfase/lysoPLipase"/>
</dbReference>
<dbReference type="InterPro" id="IPR002641">
    <property type="entry name" value="PNPLA_dom"/>
</dbReference>
<dbReference type="PANTHER" id="PTHR32176:SF85">
    <property type="entry name" value="PATATIN GROUP D-2"/>
    <property type="match status" value="1"/>
</dbReference>
<dbReference type="PANTHER" id="PTHR32176">
    <property type="entry name" value="XYLOSE ISOMERASE"/>
    <property type="match status" value="1"/>
</dbReference>
<dbReference type="Pfam" id="PF01734">
    <property type="entry name" value="Patatin"/>
    <property type="match status" value="1"/>
</dbReference>
<dbReference type="SUPFAM" id="SSF52151">
    <property type="entry name" value="FabD/lysophospholipase-like"/>
    <property type="match status" value="1"/>
</dbReference>
<dbReference type="PROSITE" id="PS51635">
    <property type="entry name" value="PNPLA"/>
    <property type="match status" value="1"/>
</dbReference>
<sequence length="386" mass="42615">MATTKSFLILFFMILATTSSTCAKLEEMVTVLSIDGGGIKGIIPAIILEFLEGQLQEVDNNKDARLADYFDVIGGTSTGGLLTAMITTPNENNRPFAAAKDIVPFYFEHGPHIFNYSGSIFGPRYDGKYLLQVLQEKLGETRVHQALTEVAISSFDIKTNKPVIFTKSNLAKSPELDAKMYDICYSTAAAPIYFPPHHFVTHTSNGATYEFNLVDGGVATVGDPALLSLSVATRLAQEDPAFSSIKSLDYKQMLLLSLGTGTNSEFDKTYTAEEAAKWGPLRWMLAIQQMTNAASSYMTDYYISTVFQARHSQNNYLRVQENALTGTTTEMDDASEANMELLVQVGETLLKKPVSKDSPETYEEALKRFAKLLSDRKKLRANKASY</sequence>
<reference key="1">
    <citation type="journal article" date="2006" name="Genetics">
        <title>Structural diversity and differential transcription of the patatin multicopy gene family during potato tuber development.</title>
        <authorList>
            <person name="Stupar R.M."/>
            <person name="Beaubien K.A."/>
            <person name="Jin W."/>
            <person name="Song J."/>
            <person name="Lee M.-K."/>
            <person name="Wu C."/>
            <person name="Zhang H.-B."/>
            <person name="Han B."/>
            <person name="Jiang J."/>
        </authorList>
    </citation>
    <scope>NUCLEOTIDE SEQUENCE [MRNA]</scope>
    <scope>DEVELOPMENTAL STAGE</scope>
    <scope>TISSUE SPECIFICITY</scope>
    <source>
        <strain>cv. Kennebec</strain>
    </source>
</reference>
<organism>
    <name type="scientific">Solanum tuberosum</name>
    <name type="common">Potato</name>
    <dbReference type="NCBI Taxonomy" id="4113"/>
    <lineage>
        <taxon>Eukaryota</taxon>
        <taxon>Viridiplantae</taxon>
        <taxon>Streptophyta</taxon>
        <taxon>Embryophyta</taxon>
        <taxon>Tracheophyta</taxon>
        <taxon>Spermatophyta</taxon>
        <taxon>Magnoliopsida</taxon>
        <taxon>eudicotyledons</taxon>
        <taxon>Gunneridae</taxon>
        <taxon>Pentapetalae</taxon>
        <taxon>asterids</taxon>
        <taxon>lamiids</taxon>
        <taxon>Solanales</taxon>
        <taxon>Solanaceae</taxon>
        <taxon>Solanoideae</taxon>
        <taxon>Solaneae</taxon>
        <taxon>Solanum</taxon>
    </lineage>
</organism>
<name>PAT15_SOLTU</name>
<accession>Q2MY36</accession>
<evidence type="ECO:0000250" key="1"/>
<evidence type="ECO:0000255" key="2"/>
<evidence type="ECO:0000255" key="3">
    <source>
        <dbReference type="PROSITE-ProRule" id="PRU01161"/>
    </source>
</evidence>
<evidence type="ECO:0000269" key="4">
    <source>
    </source>
</evidence>
<evidence type="ECO:0000305" key="5"/>
<protein>
    <recommendedName>
        <fullName>Patatin-15</fullName>
        <ecNumber>3.1.1.-</ecNumber>
    </recommendedName>
</protein>
<feature type="signal peptide" evidence="2">
    <location>
        <begin position="1"/>
        <end position="23"/>
    </location>
</feature>
<feature type="chain" id="PRO_0000296700" description="Patatin-15">
    <location>
        <begin position="24"/>
        <end position="386"/>
    </location>
</feature>
<feature type="domain" description="PNPLA" evidence="3">
    <location>
        <begin position="32"/>
        <end position="229"/>
    </location>
</feature>
<feature type="coiled-coil region" evidence="2">
    <location>
        <begin position="321"/>
        <end position="384"/>
    </location>
</feature>
<feature type="short sequence motif" description="GXGXXG" evidence="3">
    <location>
        <begin position="36"/>
        <end position="41"/>
    </location>
</feature>
<feature type="short sequence motif" description="GXSXG" evidence="3">
    <location>
        <begin position="75"/>
        <end position="79"/>
    </location>
</feature>
<feature type="short sequence motif" description="DGA/G" evidence="3">
    <location>
        <begin position="215"/>
        <end position="217"/>
    </location>
</feature>
<feature type="active site" description="Nucleophile" evidence="3">
    <location>
        <position position="77"/>
    </location>
</feature>
<feature type="active site" description="Proton acceptor" evidence="3">
    <location>
        <position position="215"/>
    </location>
</feature>
<feature type="glycosylation site" description="N-linked (GlcNAc...) asparagine" evidence="2">
    <location>
        <position position="115"/>
    </location>
</feature>
<proteinExistence type="evidence at transcript level"/>